<name>HCC2_CRYCO</name>
<proteinExistence type="predicted"/>
<comment type="subcellular location">
    <subcellularLocation>
        <location>Nucleus</location>
    </subcellularLocation>
</comment>
<protein>
    <recommendedName>
        <fullName>Major basic nuclear protein 2</fullName>
    </recommendedName>
    <alternativeName>
        <fullName>Protein p14 alpha chain</fullName>
    </alternativeName>
</protein>
<organism>
    <name type="scientific">Crypthecodinium cohnii</name>
    <name type="common">Dinoflagellate</name>
    <name type="synonym">Glenodinium cohnii</name>
    <dbReference type="NCBI Taxonomy" id="2866"/>
    <lineage>
        <taxon>Eukaryota</taxon>
        <taxon>Sar</taxon>
        <taxon>Alveolata</taxon>
        <taxon>Dinophyceae</taxon>
        <taxon>Gonyaulacales</taxon>
        <taxon>Crypthecodiniaceae</taxon>
        <taxon>Crypthecodinium</taxon>
    </lineage>
</organism>
<sequence>MKAMKATKKAMTKTGLAEALAPKPSSARRIAPPSSRAWPPSAQEVKKTGKLIIPGLVMVKTRKKPATKAGKREMFGKVVLVKAQPAKTVVKAYPVKALKDNF</sequence>
<accession>Q01238</accession>
<evidence type="ECO:0000256" key="1">
    <source>
        <dbReference type="SAM" id="MobiDB-lite"/>
    </source>
</evidence>
<keyword id="KW-0238">DNA-binding</keyword>
<keyword id="KW-0539">Nucleus</keyword>
<dbReference type="EMBL" id="X58444">
    <property type="protein sequence ID" value="CAA41350.1"/>
    <property type="molecule type" value="mRNA"/>
</dbReference>
<dbReference type="PIR" id="B56581">
    <property type="entry name" value="B56581"/>
</dbReference>
<dbReference type="SMR" id="Q01238"/>
<dbReference type="GO" id="GO:0005634">
    <property type="term" value="C:nucleus"/>
    <property type="evidence" value="ECO:0007669"/>
    <property type="project" value="UniProtKB-SubCell"/>
</dbReference>
<dbReference type="GO" id="GO:0003677">
    <property type="term" value="F:DNA binding"/>
    <property type="evidence" value="ECO:0007669"/>
    <property type="project" value="UniProtKB-KW"/>
</dbReference>
<dbReference type="InterPro" id="IPR010992">
    <property type="entry name" value="IHF-like_DNA-bd_dom_sf"/>
</dbReference>
<dbReference type="SUPFAM" id="SSF47729">
    <property type="entry name" value="IHF-like DNA-binding proteins"/>
    <property type="match status" value="1"/>
</dbReference>
<feature type="chain" id="PRO_0000083920" description="Major basic nuclear protein 2">
    <location>
        <begin position="1"/>
        <end position="102"/>
    </location>
</feature>
<feature type="region of interest" description="Disordered" evidence="1">
    <location>
        <begin position="1"/>
        <end position="43"/>
    </location>
</feature>
<feature type="compositionally biased region" description="Basic residues" evidence="1">
    <location>
        <begin position="1"/>
        <end position="11"/>
    </location>
</feature>
<feature type="compositionally biased region" description="Low complexity" evidence="1">
    <location>
        <begin position="21"/>
        <end position="42"/>
    </location>
</feature>
<gene>
    <name type="primary">HCc2</name>
</gene>
<reference key="1">
    <citation type="journal article" date="1991" name="Chromosoma">
        <title>Molecular cloning and immunolocalization of two variants of the major basic nuclear protein (HCc) from the histone-less eukaryote Crypthecodinium cohnii (Pyrrhophyta).</title>
        <authorList>
            <person name="Sala-Rovira M."/>
            <person name="Geraud M.L."/>
            <person name="Caput D."/>
            <person name="Jacques F."/>
            <person name="Soyer-Gobillard M.O."/>
            <person name="Vernet G."/>
            <person name="Herzog M."/>
        </authorList>
    </citation>
    <scope>NUCLEOTIDE SEQUENCE [MRNA]</scope>
    <source>
        <strain>WHd</strain>
    </source>
</reference>